<accession>P22955</accession>
<feature type="chain" id="PRO_0000222865" description="Capsid protein">
    <location>
        <begin position="1"/>
        <end position="339"/>
    </location>
</feature>
<feature type="region of interest" description="R domain, interaction with RNA">
    <location>
        <begin position="1"/>
        <end position="46"/>
    </location>
</feature>
<feature type="region of interest" description="Disordered" evidence="1">
    <location>
        <begin position="1"/>
        <end position="24"/>
    </location>
</feature>
<feature type="region of interest" description="S domain, virion shell">
    <location>
        <begin position="47"/>
        <end position="207"/>
    </location>
</feature>
<feature type="region of interest" description="P domain, projecting">
    <location>
        <begin position="208"/>
        <end position="339"/>
    </location>
</feature>
<feature type="compositionally biased region" description="Basic residues" evidence="1">
    <location>
        <begin position="1"/>
        <end position="15"/>
    </location>
</feature>
<feature type="mutagenesis site" description="Strongly impairs the systemic spread of viral genomes." evidence="2">
    <original>K</original>
    <variation>A</variation>
    <location>
        <position position="4"/>
    </location>
</feature>
<feature type="mutagenesis site" description="Strongly impairs the systemic spread of viral genomes; in association with A-8." evidence="2">
    <original>K</original>
    <variation>A</variation>
    <location>
        <position position="7"/>
    </location>
</feature>
<feature type="mutagenesis site" description="Strongly impairs the systemic spread of viral genomes; in association with A-7." evidence="2">
    <original>K</original>
    <variation>A</variation>
    <location>
        <position position="8"/>
    </location>
</feature>
<feature type="strand" evidence="5">
    <location>
        <begin position="54"/>
        <end position="60"/>
    </location>
</feature>
<feature type="strand" evidence="5">
    <location>
        <begin position="66"/>
        <end position="68"/>
    </location>
</feature>
<feature type="strand" evidence="5">
    <location>
        <begin position="77"/>
        <end position="81"/>
    </location>
</feature>
<feature type="turn" evidence="5">
    <location>
        <begin position="83"/>
        <end position="85"/>
    </location>
</feature>
<feature type="helix" evidence="5">
    <location>
        <begin position="89"/>
        <end position="93"/>
    </location>
</feature>
<feature type="strand" evidence="5">
    <location>
        <begin position="96"/>
        <end position="105"/>
    </location>
</feature>
<feature type="strand" evidence="5">
    <location>
        <begin position="108"/>
        <end position="110"/>
    </location>
</feature>
<feature type="strand" evidence="5">
    <location>
        <begin position="119"/>
        <end position="124"/>
    </location>
</feature>
<feature type="turn" evidence="5">
    <location>
        <begin position="137"/>
        <end position="141"/>
    </location>
</feature>
<feature type="strand" evidence="5">
    <location>
        <begin position="142"/>
        <end position="149"/>
    </location>
</feature>
<feature type="helix" evidence="5">
    <location>
        <begin position="175"/>
        <end position="177"/>
    </location>
</feature>
<feature type="strand" evidence="5">
    <location>
        <begin position="184"/>
        <end position="187"/>
    </location>
</feature>
<feature type="strand" evidence="5">
    <location>
        <begin position="194"/>
        <end position="210"/>
    </location>
</feature>
<feature type="strand" evidence="5">
    <location>
        <begin position="220"/>
        <end position="222"/>
    </location>
</feature>
<feature type="strand" evidence="5">
    <location>
        <begin position="241"/>
        <end position="244"/>
    </location>
</feature>
<feature type="strand" evidence="5">
    <location>
        <begin position="249"/>
        <end position="251"/>
    </location>
</feature>
<feature type="strand" evidence="5">
    <location>
        <begin position="258"/>
        <end position="266"/>
    </location>
</feature>
<feature type="strand" evidence="5">
    <location>
        <begin position="273"/>
        <end position="275"/>
    </location>
</feature>
<feature type="strand" evidence="5">
    <location>
        <begin position="277"/>
        <end position="281"/>
    </location>
</feature>
<feature type="strand" evidence="5">
    <location>
        <begin position="291"/>
        <end position="302"/>
    </location>
</feature>
<feature type="strand" evidence="5">
    <location>
        <begin position="311"/>
        <end position="314"/>
    </location>
</feature>
<feature type="strand" evidence="5">
    <location>
        <begin position="323"/>
        <end position="325"/>
    </location>
</feature>
<organismHost>
    <name type="scientific">Medicago sativa</name>
    <name type="common">Alfalfa</name>
    <dbReference type="NCBI Taxonomy" id="3879"/>
</organismHost>
<organismHost>
    <name type="scientific">Melilotus officinalis</name>
    <name type="common">Yellow sweet clover</name>
    <name type="synonym">Trifolium officinale</name>
    <dbReference type="NCBI Taxonomy" id="47083"/>
</organismHost>
<organismHost>
    <name type="scientific">Trifolium pratense</name>
    <name type="common">Red clover</name>
    <dbReference type="NCBI Taxonomy" id="57577"/>
</organismHost>
<organismHost>
    <name type="scientific">Trifolium repens</name>
    <name type="common">Creeping white clover</name>
    <dbReference type="NCBI Taxonomy" id="3899"/>
</organismHost>
<organism>
    <name type="scientific">Red clover necrotic mosaic virus</name>
    <name type="common">RCNMV</name>
    <dbReference type="NCBI Taxonomy" id="12267"/>
    <lineage>
        <taxon>Viruses</taxon>
        <taxon>Riboviria</taxon>
        <taxon>Orthornavirae</taxon>
        <taxon>Kitrinoviricota</taxon>
        <taxon>Tolucaviricetes</taxon>
        <taxon>Tolivirales</taxon>
        <taxon>Tombusviridae</taxon>
        <taxon>Regressovirinae</taxon>
        <taxon>Dianthovirus</taxon>
        <taxon>Dianthovirus trifolii</taxon>
    </lineage>
</organism>
<keyword id="KW-0002">3D-structure</keyword>
<keyword id="KW-0167">Capsid protein</keyword>
<keyword id="KW-1185">Reference proteome</keyword>
<keyword id="KW-0694">RNA-binding</keyword>
<keyword id="KW-1142">T=3 icosahedral capsid protein</keyword>
<keyword id="KW-0946">Virion</keyword>
<reference key="1">
    <citation type="journal article" date="1989" name="Virology">
        <title>The complete nucleotide sequence and genome organization of red clover necrotic mosaic virus RNA-1.</title>
        <authorList>
            <person name="Xiong Z."/>
            <person name="Lommel S.A."/>
        </authorList>
    </citation>
    <scope>NUCLEOTIDE SEQUENCE [GENOMIC RNA]</scope>
    <source>
        <strain>Australian</strain>
    </source>
</reference>
<reference key="2">
    <citation type="journal article" date="2012" name="Mol. Plant Pathol.">
        <title>The Red clover necrotic mosaic virus capsid protein N-terminal lysine-rich motif is a determinant of symptomatology and virion accumulation.</title>
        <authorList>
            <person name="Park S.H."/>
            <person name="Sit T.L."/>
            <person name="Kim K.H."/>
            <person name="Lommel S.A."/>
        </authorList>
    </citation>
    <scope>FUNCTION</scope>
    <scope>DOMAIN</scope>
    <scope>MUTAGENESIS OF LYS-4; LYS-7 AND LYS-8</scope>
    <scope>SUBCELLULAR LOCATION</scope>
</reference>
<reference key="3">
    <citation type="journal article" date="2013" name="Virus Res.">
        <title>The red clover necrotic mosaic virus capsid protein N-terminal amino acids possess specific RNA binding activity and are required for stable virion assembly.</title>
        <authorList>
            <person name="Park S.H."/>
            <person name="Sit T.L."/>
            <person name="Kim K.H."/>
            <person name="Lommel S.A."/>
        </authorList>
    </citation>
    <scope>FUNCTION</scope>
    <scope>RNA-BINDING</scope>
    <scope>SUBCELLULAR LOCATION</scope>
</reference>
<sequence length="339" mass="36583">MSSKAPKKSKQRSQPRNRTPNTSVKTVAIPFAKTQIIKTVNPPPKPARGILHTQLVMSVVGSVQMRTNNGKSNQRFRLNPSNPALFPTLAYEAANYDMYRLKKLTLRYVPLVTVQNSGRVAMIWDPDSQDSAPQSRQEISAYSRSVSTAVYEKCSLTIPADNQWRFVADNTTVDRKLVDFGQLLFVTHSGSDGIETGDIFLDCEVEFKGPQPTASIVQKTVIDLGGTLTSFEGPSYLMPPDAFITSSSFGLFVDVAGTYLLTLVVTCSTTGSVTVGGNSTLVGDGRAAYGSSNYIASIVFTSSGVLSTTPSVQFSGSSGVSRVQMNICRCKQGNTFILG</sequence>
<gene>
    <name type="ORF">ORF2</name>
</gene>
<name>CAPSD_RCNMV</name>
<comment type="function">
    <text evidence="2 3">Capsid protein self-assembles to form an icosahedral capsid with a T=3 symmetry, about 31-34 nm in diameter, and consisting of 180 capsid proteins. Plays an essential role in virion formation by interacting, via its N-terminal region, with the bipartite viral RNA genome and specifically with the 3' terminus of RNA-1 and the TA element on RNA-2. Also participates in symptom development, viral RNA accumulation and systemic movement within the host.</text>
</comment>
<comment type="subunit">
    <text evidence="4">Homomultimer.</text>
</comment>
<comment type="subcellular location">
    <subcellularLocation>
        <location evidence="2 3">Virion</location>
    </subcellularLocation>
</comment>
<comment type="domain">
    <text evidence="2">The N-terminal R domain is rich in basic residues and is essential for RNA-binding and virion assembly functions.</text>
</comment>
<comment type="similarity">
    <text evidence="4">Belongs to the icosahedral plant coat protein family.</text>
</comment>
<proteinExistence type="evidence at protein level"/>
<evidence type="ECO:0000256" key="1">
    <source>
        <dbReference type="SAM" id="MobiDB-lite"/>
    </source>
</evidence>
<evidence type="ECO:0000269" key="2">
    <source>
    </source>
</evidence>
<evidence type="ECO:0000269" key="3">
    <source>
    </source>
</evidence>
<evidence type="ECO:0000305" key="4"/>
<evidence type="ECO:0007829" key="5">
    <source>
        <dbReference type="PDB" id="6MRM"/>
    </source>
</evidence>
<dbReference type="EMBL" id="J04357">
    <property type="protein sequence ID" value="AAB02542.1"/>
    <property type="molecule type" value="Genomic_RNA"/>
</dbReference>
<dbReference type="PIR" id="C43684">
    <property type="entry name" value="C43684"/>
</dbReference>
<dbReference type="RefSeq" id="NP_620526.1">
    <property type="nucleotide sequence ID" value="NC_003756.1"/>
</dbReference>
<dbReference type="PDB" id="6MRM">
    <property type="method" value="EM"/>
    <property type="resolution" value="2.90 A"/>
    <property type="chains" value="A/B/C=1-339"/>
</dbReference>
<dbReference type="PDBsum" id="6MRM"/>
<dbReference type="EMDB" id="EMD-9205"/>
<dbReference type="SMR" id="P22955"/>
<dbReference type="KEGG" id="vg:24271523"/>
<dbReference type="OrthoDB" id="10131at10239"/>
<dbReference type="Proteomes" id="UP000008651">
    <property type="component" value="Genome"/>
</dbReference>
<dbReference type="GO" id="GO:0039617">
    <property type="term" value="C:T=3 icosahedral viral capsid"/>
    <property type="evidence" value="ECO:0007669"/>
    <property type="project" value="UniProtKB-KW"/>
</dbReference>
<dbReference type="GO" id="GO:0003723">
    <property type="term" value="F:RNA binding"/>
    <property type="evidence" value="ECO:0007669"/>
    <property type="project" value="UniProtKB-KW"/>
</dbReference>
<dbReference type="GO" id="GO:0005198">
    <property type="term" value="F:structural molecule activity"/>
    <property type="evidence" value="ECO:0007669"/>
    <property type="project" value="InterPro"/>
</dbReference>
<dbReference type="Gene3D" id="2.60.120.20">
    <property type="match status" value="1"/>
</dbReference>
<dbReference type="Gene3D" id="2.60.40.4030">
    <property type="match status" value="1"/>
</dbReference>
<dbReference type="InterPro" id="IPR000937">
    <property type="entry name" value="Capsid_prot_S-dom_vir"/>
</dbReference>
<dbReference type="InterPro" id="IPR029053">
    <property type="entry name" value="Viral_coat"/>
</dbReference>
<dbReference type="Pfam" id="PF00729">
    <property type="entry name" value="Viral_coat"/>
    <property type="match status" value="1"/>
</dbReference>
<dbReference type="PRINTS" id="PR00233">
    <property type="entry name" value="ICOSAHEDRAL"/>
</dbReference>
<dbReference type="SUPFAM" id="SSF88633">
    <property type="entry name" value="Positive stranded ssRNA viruses"/>
    <property type="match status" value="1"/>
</dbReference>
<dbReference type="PROSITE" id="PS00555">
    <property type="entry name" value="ICOSAH_VIR_COAT_S"/>
    <property type="match status" value="1"/>
</dbReference>
<protein>
    <recommendedName>
        <fullName>Capsid protein</fullName>
    </recommendedName>
    <alternativeName>
        <fullName>Coat protein</fullName>
    </alternativeName>
</protein>